<reference key="1">
    <citation type="journal article" date="2007" name="Proc. Natl. Acad. Sci. U.S.A.">
        <title>Deep-sea vent epsilon-proteobacterial genomes provide insights into emergence of pathogens.</title>
        <authorList>
            <person name="Nakagawa S."/>
            <person name="Takaki Y."/>
            <person name="Shimamura S."/>
            <person name="Reysenbach A.-L."/>
            <person name="Takai K."/>
            <person name="Horikoshi K."/>
        </authorList>
    </citation>
    <scope>NUCLEOTIDE SEQUENCE [LARGE SCALE GENOMIC DNA]</scope>
    <source>
        <strain>NBC37-1</strain>
    </source>
</reference>
<name>DNAK_SULNB</name>
<protein>
    <recommendedName>
        <fullName evidence="1">Chaperone protein DnaK</fullName>
    </recommendedName>
    <alternativeName>
        <fullName evidence="1">HSP70</fullName>
    </alternativeName>
    <alternativeName>
        <fullName evidence="1">Heat shock 70 kDa protein</fullName>
    </alternativeName>
    <alternativeName>
        <fullName evidence="1">Heat shock protein 70</fullName>
    </alternativeName>
</protein>
<sequence length="627" mass="66826">MGKVLGIDLGTTNSAMAVYTNGEAAIIANKEGKNTTPSIVAFTDKGEVLVGESAKRQAVTNPEKTIYSIKRIMGLMCEEEKANEAKERLPYHIIDRNGACAIEVAGKTYTPQEISAKVLMKMKEDAEAYLGETVTDAVITVPAYFNDAQRKATKEAGTIAGLNVLRIINEPTSAALAYGLDKKEAEQIVVYDLGGGTFDVTALETGDGVVEVLATGGDAFLGGDDFDNRIIDYVADEFKSESGIDIKADVMALQRVKDAAEAAKKELSSATETEINLPFITADASGPKHLVTKITRAKFESLIGDLVAKTIKTIEAVLKDAGLSKNDVKEVVMVGGSTRVPLVQEEVKKFFNKELNKSVNPDEVVALGAAIQGGVLAGDVKDVLLLDVTPLSLGIETLGGVMTKVIEKGTTIPAKKSQIFSTAEDNQPAVSIHVLQGEREFAKDNKSLGMFELRDIPAAPRGVPQIEVTFDIDANGILTVSAVDKGTGKSQEIKITGSSGLSDEEIEKMVQDAEAHKAEDEKRKAVVEAKNQADALIHQTKKSLDDLGENFDANEKAGIEAAIADLETVLKDDNATKEQIDEKVKALTEKSHKLAEAAYAKEQGGQQGAADAGKKADDDDVIDAEVE</sequence>
<dbReference type="EMBL" id="AP009179">
    <property type="protein sequence ID" value="BAF72819.1"/>
    <property type="molecule type" value="Genomic_DNA"/>
</dbReference>
<dbReference type="RefSeq" id="WP_012083632.1">
    <property type="nucleotide sequence ID" value="NC_009663.1"/>
</dbReference>
<dbReference type="SMR" id="A6QBG0"/>
<dbReference type="STRING" id="387093.SUN_1872"/>
<dbReference type="KEGG" id="sun:SUN_1872"/>
<dbReference type="eggNOG" id="COG0443">
    <property type="taxonomic scope" value="Bacteria"/>
</dbReference>
<dbReference type="HOGENOM" id="CLU_005965_2_1_7"/>
<dbReference type="OrthoDB" id="9766019at2"/>
<dbReference type="Proteomes" id="UP000006378">
    <property type="component" value="Chromosome"/>
</dbReference>
<dbReference type="GO" id="GO:0005524">
    <property type="term" value="F:ATP binding"/>
    <property type="evidence" value="ECO:0007669"/>
    <property type="project" value="UniProtKB-UniRule"/>
</dbReference>
<dbReference type="GO" id="GO:0140662">
    <property type="term" value="F:ATP-dependent protein folding chaperone"/>
    <property type="evidence" value="ECO:0007669"/>
    <property type="project" value="InterPro"/>
</dbReference>
<dbReference type="GO" id="GO:0051082">
    <property type="term" value="F:unfolded protein binding"/>
    <property type="evidence" value="ECO:0007669"/>
    <property type="project" value="InterPro"/>
</dbReference>
<dbReference type="CDD" id="cd10234">
    <property type="entry name" value="ASKHA_NBD_HSP70_DnaK-like"/>
    <property type="match status" value="1"/>
</dbReference>
<dbReference type="FunFam" id="2.60.34.10:FF:000014">
    <property type="entry name" value="Chaperone protein DnaK HSP70"/>
    <property type="match status" value="1"/>
</dbReference>
<dbReference type="FunFam" id="1.20.1270.10:FF:000001">
    <property type="entry name" value="Molecular chaperone DnaK"/>
    <property type="match status" value="1"/>
</dbReference>
<dbReference type="FunFam" id="3.30.420.40:FF:000004">
    <property type="entry name" value="Molecular chaperone DnaK"/>
    <property type="match status" value="1"/>
</dbReference>
<dbReference type="FunFam" id="3.90.640.10:FF:000003">
    <property type="entry name" value="Molecular chaperone DnaK"/>
    <property type="match status" value="1"/>
</dbReference>
<dbReference type="Gene3D" id="1.20.1270.10">
    <property type="match status" value="1"/>
</dbReference>
<dbReference type="Gene3D" id="3.30.420.40">
    <property type="match status" value="2"/>
</dbReference>
<dbReference type="Gene3D" id="3.90.640.10">
    <property type="entry name" value="Actin, Chain A, domain 4"/>
    <property type="match status" value="1"/>
</dbReference>
<dbReference type="Gene3D" id="2.60.34.10">
    <property type="entry name" value="Substrate Binding Domain Of DNAk, Chain A, domain 1"/>
    <property type="match status" value="1"/>
</dbReference>
<dbReference type="HAMAP" id="MF_00332">
    <property type="entry name" value="DnaK"/>
    <property type="match status" value="1"/>
</dbReference>
<dbReference type="InterPro" id="IPR043129">
    <property type="entry name" value="ATPase_NBD"/>
</dbReference>
<dbReference type="InterPro" id="IPR012725">
    <property type="entry name" value="Chaperone_DnaK"/>
</dbReference>
<dbReference type="InterPro" id="IPR018181">
    <property type="entry name" value="Heat_shock_70_CS"/>
</dbReference>
<dbReference type="InterPro" id="IPR029048">
    <property type="entry name" value="HSP70_C_sf"/>
</dbReference>
<dbReference type="InterPro" id="IPR029047">
    <property type="entry name" value="HSP70_peptide-bd_sf"/>
</dbReference>
<dbReference type="InterPro" id="IPR013126">
    <property type="entry name" value="Hsp_70_fam"/>
</dbReference>
<dbReference type="NCBIfam" id="NF001413">
    <property type="entry name" value="PRK00290.1"/>
    <property type="match status" value="1"/>
</dbReference>
<dbReference type="NCBIfam" id="NF003520">
    <property type="entry name" value="PRK05183.1"/>
    <property type="match status" value="1"/>
</dbReference>
<dbReference type="NCBIfam" id="TIGR02350">
    <property type="entry name" value="prok_dnaK"/>
    <property type="match status" value="1"/>
</dbReference>
<dbReference type="PANTHER" id="PTHR19375">
    <property type="entry name" value="HEAT SHOCK PROTEIN 70KDA"/>
    <property type="match status" value="1"/>
</dbReference>
<dbReference type="Pfam" id="PF00012">
    <property type="entry name" value="HSP70"/>
    <property type="match status" value="1"/>
</dbReference>
<dbReference type="PRINTS" id="PR00301">
    <property type="entry name" value="HEATSHOCK70"/>
</dbReference>
<dbReference type="SUPFAM" id="SSF53067">
    <property type="entry name" value="Actin-like ATPase domain"/>
    <property type="match status" value="2"/>
</dbReference>
<dbReference type="SUPFAM" id="SSF100934">
    <property type="entry name" value="Heat shock protein 70kD (HSP70), C-terminal subdomain"/>
    <property type="match status" value="1"/>
</dbReference>
<dbReference type="SUPFAM" id="SSF100920">
    <property type="entry name" value="Heat shock protein 70kD (HSP70), peptide-binding domain"/>
    <property type="match status" value="1"/>
</dbReference>
<dbReference type="PROSITE" id="PS00297">
    <property type="entry name" value="HSP70_1"/>
    <property type="match status" value="1"/>
</dbReference>
<dbReference type="PROSITE" id="PS01036">
    <property type="entry name" value="HSP70_3"/>
    <property type="match status" value="1"/>
</dbReference>
<accession>A6QBG0</accession>
<evidence type="ECO:0000255" key="1">
    <source>
        <dbReference type="HAMAP-Rule" id="MF_00332"/>
    </source>
</evidence>
<evidence type="ECO:0000256" key="2">
    <source>
        <dbReference type="SAM" id="MobiDB-lite"/>
    </source>
</evidence>
<proteinExistence type="inferred from homology"/>
<keyword id="KW-0067">ATP-binding</keyword>
<keyword id="KW-0143">Chaperone</keyword>
<keyword id="KW-0547">Nucleotide-binding</keyword>
<keyword id="KW-0597">Phosphoprotein</keyword>
<keyword id="KW-0346">Stress response</keyword>
<gene>
    <name evidence="1" type="primary">dnaK</name>
    <name type="ordered locus">SUN_1872</name>
</gene>
<organism>
    <name type="scientific">Sulfurovum sp. (strain NBC37-1)</name>
    <dbReference type="NCBI Taxonomy" id="387093"/>
    <lineage>
        <taxon>Bacteria</taxon>
        <taxon>Pseudomonadati</taxon>
        <taxon>Campylobacterota</taxon>
        <taxon>Epsilonproteobacteria</taxon>
        <taxon>Campylobacterales</taxon>
        <taxon>Sulfurovaceae</taxon>
        <taxon>Sulfurovum</taxon>
    </lineage>
</organism>
<comment type="function">
    <text evidence="1">Acts as a chaperone.</text>
</comment>
<comment type="induction">
    <text evidence="1">By stress conditions e.g. heat shock.</text>
</comment>
<comment type="similarity">
    <text evidence="1">Belongs to the heat shock protein 70 family.</text>
</comment>
<feature type="chain" id="PRO_1000059689" description="Chaperone protein DnaK">
    <location>
        <begin position="1"/>
        <end position="627"/>
    </location>
</feature>
<feature type="region of interest" description="Disordered" evidence="2">
    <location>
        <begin position="598"/>
        <end position="627"/>
    </location>
</feature>
<feature type="compositionally biased region" description="Low complexity" evidence="2">
    <location>
        <begin position="598"/>
        <end position="611"/>
    </location>
</feature>
<feature type="compositionally biased region" description="Acidic residues" evidence="2">
    <location>
        <begin position="618"/>
        <end position="627"/>
    </location>
</feature>
<feature type="modified residue" description="Phosphothreonine; by autocatalysis" evidence="1">
    <location>
        <position position="197"/>
    </location>
</feature>